<gene>
    <name type="primary">kpsD</name>
</gene>
<name>KPSD5_ECOLX</name>
<comment type="function">
    <text>Involved in the translocation of the polysialic acid capsule across the outer membrane to the cell surface. May function as the periplasmic binding element of the PSA transport system, in which it transiently interacts with the membrane component of the transporter, binds polysaccharide and transports the polymer to a component in the outer membrane.</text>
</comment>
<comment type="subcellular location">
    <subcellularLocation>
        <location>Periplasm</location>
    </subcellularLocation>
</comment>
<comment type="similarity">
    <text evidence="2">To E.coli K1 KpsD.</text>
</comment>
<sequence length="558" mass="60484">MKLFKSILLIAACHAAQASATIDINADPNLTGAAPLTGILNGQKSDTQNMSGFDNTPPPAPPVVMSRMFGAQLFNGTSADSGATVGFNPDYILNPGDSIQVRLWGAFTFDGALQVDPKGNIFLPNVGPVKIAGVSNSQLNALVTSKVKEVYQSNVNVYASLLQAQPVKVYVTGFVRNPGLYGGVTSDSLLNYLIKAGGVDPERGSYVDIVVKRGNRVRSNVNLYDFLLNGKLGLSQFADGDTIIVGPRQHTFSVQGDVFNSYDFEFRESSIPVTEALSWARPKPGATHITIMRKQGLQKRSEYYPISSAPGRMLQNGDTLIVSTDRYAGTIQVRVEGAHSGEHAMVLPYGSTMRAVLEKVRPNSMSQMNAVQLYRPSVAQRQKEMLNLSLQKLEEASLSAQSSTKEEASLRMQEAQLISRFVAKARTVVPKGEVILNESNIDSVLLEDGDVINIPEKTSLVMVHGEVLFPNAVSWQKGMTTEDYIEKCGGLTQKSGNARIIVIRQNGARVNAEDVDSLKPGDEIMVLPKYESKNIEVTRGISTILYQLAVGAKVILSL</sequence>
<reference key="1">
    <citation type="journal article" date="1993" name="J. Bacteriol.">
        <title>Molecular analysis of region 1 of the Escherichia coli K5 antigen gene cluster: a region encoding proteins involved in cell surface expression of capsular polysaccharide.</title>
        <authorList>
            <person name="Pazzani C."/>
            <person name="Rosenow C."/>
            <person name="Boulnois G.J."/>
            <person name="Bronner D."/>
            <person name="Jann K."/>
            <person name="Roberts I.S."/>
        </authorList>
    </citation>
    <scope>NUCLEOTIDE SEQUENCE [GENOMIC DNA]</scope>
    <source>
        <strain>K5</strain>
    </source>
</reference>
<evidence type="ECO:0000250" key="1"/>
<evidence type="ECO:0000305" key="2"/>
<organism>
    <name type="scientific">Escherichia coli</name>
    <dbReference type="NCBI Taxonomy" id="562"/>
    <lineage>
        <taxon>Bacteria</taxon>
        <taxon>Pseudomonadati</taxon>
        <taxon>Pseudomonadota</taxon>
        <taxon>Gammaproteobacteria</taxon>
        <taxon>Enterobacterales</taxon>
        <taxon>Enterobacteriaceae</taxon>
        <taxon>Escherichia</taxon>
    </lineage>
</organism>
<feature type="signal peptide" evidence="1">
    <location>
        <begin position="1"/>
        <end position="20"/>
    </location>
</feature>
<feature type="chain" id="PRO_0000021559" description="Polysialic acid transport protein KpsD">
    <location>
        <begin position="21"/>
        <end position="558"/>
    </location>
</feature>
<keyword id="KW-0972">Capsule biogenesis/degradation</keyword>
<keyword id="KW-0574">Periplasm</keyword>
<keyword id="KW-0732">Signal</keyword>
<keyword id="KW-0813">Transport</keyword>
<protein>
    <recommendedName>
        <fullName>Polysialic acid transport protein KpsD</fullName>
    </recommendedName>
</protein>
<dbReference type="EMBL" id="X74567">
    <property type="protein sequence ID" value="CAA52656.1"/>
    <property type="molecule type" value="Genomic_DNA"/>
</dbReference>
<dbReference type="PIR" id="B48492">
    <property type="entry name" value="B48492"/>
</dbReference>
<dbReference type="SMR" id="P42213"/>
<dbReference type="GO" id="GO:0042597">
    <property type="term" value="C:periplasmic space"/>
    <property type="evidence" value="ECO:0007669"/>
    <property type="project" value="UniProtKB-SubCell"/>
</dbReference>
<dbReference type="GO" id="GO:0015159">
    <property type="term" value="F:polysaccharide transmembrane transporter activity"/>
    <property type="evidence" value="ECO:0007669"/>
    <property type="project" value="InterPro"/>
</dbReference>
<dbReference type="Gene3D" id="3.10.560.10">
    <property type="entry name" value="Outer membrane lipoprotein wza domain like"/>
    <property type="match status" value="2"/>
</dbReference>
<dbReference type="Gene3D" id="3.30.1950.10">
    <property type="entry name" value="wza like domain"/>
    <property type="match status" value="1"/>
</dbReference>
<dbReference type="InterPro" id="IPR049712">
    <property type="entry name" value="Poly_export"/>
</dbReference>
<dbReference type="InterPro" id="IPR003715">
    <property type="entry name" value="Poly_export_N"/>
</dbReference>
<dbReference type="InterPro" id="IPR019554">
    <property type="entry name" value="Soluble_ligand-bd"/>
</dbReference>
<dbReference type="PANTHER" id="PTHR33619">
    <property type="entry name" value="POLYSACCHARIDE EXPORT PROTEIN GFCE-RELATED"/>
    <property type="match status" value="1"/>
</dbReference>
<dbReference type="PANTHER" id="PTHR33619:SF3">
    <property type="entry name" value="POLYSACCHARIDE EXPORT PROTEIN GFCE-RELATED"/>
    <property type="match status" value="1"/>
</dbReference>
<dbReference type="Pfam" id="PF02563">
    <property type="entry name" value="Poly_export"/>
    <property type="match status" value="1"/>
</dbReference>
<dbReference type="Pfam" id="PF10531">
    <property type="entry name" value="SLBB"/>
    <property type="match status" value="1"/>
</dbReference>
<accession>P42213</accession>
<proteinExistence type="inferred from homology"/>